<gene>
    <name evidence="1" type="primary">ligA</name>
    <name type="ordered locus">PSPPH_1779</name>
</gene>
<organism>
    <name type="scientific">Pseudomonas savastanoi pv. phaseolicola (strain 1448A / Race 6)</name>
    <name type="common">Pseudomonas syringae pv. phaseolicola (strain 1448A / Race 6)</name>
    <dbReference type="NCBI Taxonomy" id="264730"/>
    <lineage>
        <taxon>Bacteria</taxon>
        <taxon>Pseudomonadati</taxon>
        <taxon>Pseudomonadota</taxon>
        <taxon>Gammaproteobacteria</taxon>
        <taxon>Pseudomonadales</taxon>
        <taxon>Pseudomonadaceae</taxon>
        <taxon>Pseudomonas</taxon>
    </lineage>
</organism>
<proteinExistence type="inferred from homology"/>
<sequence>MKAVETRILELRAELDEHNYRYHVLDEPSIPDVEYDRLFHELKALEAENPHLVTPDSPTQRVGSAALSAFTQVRHEMPMLSLGNAFEENDMLEFDRRVTEGLDLPAGDLFGAGSKVQYSCEPKLDGLAVSLLYRDGALVRGATRGDGTTGEDISVNVRTVRNIPLKLKGKGWPDVLEVRGEVFMSKAGFERLNASQLEIGGKTFANPRNAAAGSLRQLDSKITANRPLEFCCYGLGQTSAEIADTHIGVLETLKKWGMPVSHELKLANGVEECLDYYRDIGERRLTLSYEIDGVVFKVNNLAAQRELGFRAREPRWAIAHKFPAMEELTELLDVEFQVGRTGAVTPVARLKPVKVAGVMVANATLHNMDEVARLGLMIGDTVIIRRAGDVIPQVVQVVAERRPENARAVQVPQTCPVCGSHVERTQLIKRSKGKETVTEGAVYRCVGRLACGAQLKQAIIHYVSRRAMDIEGLGDKTIEQLVDEKLIGSPADLYKLKYEQIIDLEGFAEISSNKLLKAIADSRQPTLARFIYALGIPDVGEETAKVLARSLASLDRVKQALPEVLTYLPDVGLEVAYEIHSFFEDEHNRNVIDALLGECGLQLQDQGELGAEFAASTTLEGLIDKLHIPSVGPGAAQKLADRFGTLEAIISADWLDMRQTLPEKQAKSVRDFFDDSAHAERARAIEAQLKDFGMHWRSEKKTVEGLPLAGQTWVLTGSLERMSRDVAKEKLESLGAKVSGSVSAKTHTVVAGPGAGSKLTKANELGLTVLDEDALLKRLTELGVAVD</sequence>
<protein>
    <recommendedName>
        <fullName evidence="1">DNA ligase</fullName>
        <ecNumber evidence="1">6.5.1.2</ecNumber>
    </recommendedName>
    <alternativeName>
        <fullName evidence="1">Polydeoxyribonucleotide synthase [NAD(+)]</fullName>
    </alternativeName>
</protein>
<accession>Q48KR2</accession>
<feature type="chain" id="PRO_0000313380" description="DNA ligase">
    <location>
        <begin position="1"/>
        <end position="787"/>
    </location>
</feature>
<feature type="domain" description="BRCT" evidence="1">
    <location>
        <begin position="703"/>
        <end position="787"/>
    </location>
</feature>
<feature type="active site" description="N6-AMP-lysine intermediate" evidence="1">
    <location>
        <position position="123"/>
    </location>
</feature>
<feature type="binding site" evidence="1">
    <location>
        <begin position="32"/>
        <end position="36"/>
    </location>
    <ligand>
        <name>NAD(+)</name>
        <dbReference type="ChEBI" id="CHEBI:57540"/>
    </ligand>
</feature>
<feature type="binding site" evidence="1">
    <location>
        <begin position="81"/>
        <end position="82"/>
    </location>
    <ligand>
        <name>NAD(+)</name>
        <dbReference type="ChEBI" id="CHEBI:57540"/>
    </ligand>
</feature>
<feature type="binding site" evidence="1">
    <location>
        <position position="121"/>
    </location>
    <ligand>
        <name>NAD(+)</name>
        <dbReference type="ChEBI" id="CHEBI:57540"/>
    </ligand>
</feature>
<feature type="binding site" evidence="1">
    <location>
        <position position="144"/>
    </location>
    <ligand>
        <name>NAD(+)</name>
        <dbReference type="ChEBI" id="CHEBI:57540"/>
    </ligand>
</feature>
<feature type="binding site" evidence="1">
    <location>
        <position position="181"/>
    </location>
    <ligand>
        <name>NAD(+)</name>
        <dbReference type="ChEBI" id="CHEBI:57540"/>
    </ligand>
</feature>
<feature type="binding site" evidence="1">
    <location>
        <position position="297"/>
    </location>
    <ligand>
        <name>NAD(+)</name>
        <dbReference type="ChEBI" id="CHEBI:57540"/>
    </ligand>
</feature>
<feature type="binding site" evidence="1">
    <location>
        <position position="321"/>
    </location>
    <ligand>
        <name>NAD(+)</name>
        <dbReference type="ChEBI" id="CHEBI:57540"/>
    </ligand>
</feature>
<feature type="binding site" evidence="1">
    <location>
        <position position="415"/>
    </location>
    <ligand>
        <name>Zn(2+)</name>
        <dbReference type="ChEBI" id="CHEBI:29105"/>
    </ligand>
</feature>
<feature type="binding site" evidence="1">
    <location>
        <position position="418"/>
    </location>
    <ligand>
        <name>Zn(2+)</name>
        <dbReference type="ChEBI" id="CHEBI:29105"/>
    </ligand>
</feature>
<feature type="binding site" evidence="1">
    <location>
        <position position="445"/>
    </location>
    <ligand>
        <name>Zn(2+)</name>
        <dbReference type="ChEBI" id="CHEBI:29105"/>
    </ligand>
</feature>
<feature type="binding site" evidence="1">
    <location>
        <position position="451"/>
    </location>
    <ligand>
        <name>Zn(2+)</name>
        <dbReference type="ChEBI" id="CHEBI:29105"/>
    </ligand>
</feature>
<evidence type="ECO:0000255" key="1">
    <source>
        <dbReference type="HAMAP-Rule" id="MF_01588"/>
    </source>
</evidence>
<dbReference type="EC" id="6.5.1.2" evidence="1"/>
<dbReference type="EMBL" id="CP000058">
    <property type="protein sequence ID" value="AAZ37705.1"/>
    <property type="molecule type" value="Genomic_DNA"/>
</dbReference>
<dbReference type="RefSeq" id="WP_004667470.1">
    <property type="nucleotide sequence ID" value="NC_005773.3"/>
</dbReference>
<dbReference type="SMR" id="Q48KR2"/>
<dbReference type="KEGG" id="psp:PSPPH_1779"/>
<dbReference type="eggNOG" id="COG0272">
    <property type="taxonomic scope" value="Bacteria"/>
</dbReference>
<dbReference type="HOGENOM" id="CLU_007764_2_1_6"/>
<dbReference type="Proteomes" id="UP000000551">
    <property type="component" value="Chromosome"/>
</dbReference>
<dbReference type="GO" id="GO:0005829">
    <property type="term" value="C:cytosol"/>
    <property type="evidence" value="ECO:0007669"/>
    <property type="project" value="TreeGrafter"/>
</dbReference>
<dbReference type="GO" id="GO:0003677">
    <property type="term" value="F:DNA binding"/>
    <property type="evidence" value="ECO:0007669"/>
    <property type="project" value="InterPro"/>
</dbReference>
<dbReference type="GO" id="GO:0003911">
    <property type="term" value="F:DNA ligase (NAD+) activity"/>
    <property type="evidence" value="ECO:0007669"/>
    <property type="project" value="UniProtKB-UniRule"/>
</dbReference>
<dbReference type="GO" id="GO:0046872">
    <property type="term" value="F:metal ion binding"/>
    <property type="evidence" value="ECO:0007669"/>
    <property type="project" value="UniProtKB-KW"/>
</dbReference>
<dbReference type="GO" id="GO:0006281">
    <property type="term" value="P:DNA repair"/>
    <property type="evidence" value="ECO:0007669"/>
    <property type="project" value="UniProtKB-KW"/>
</dbReference>
<dbReference type="GO" id="GO:0006260">
    <property type="term" value="P:DNA replication"/>
    <property type="evidence" value="ECO:0007669"/>
    <property type="project" value="UniProtKB-KW"/>
</dbReference>
<dbReference type="CDD" id="cd17748">
    <property type="entry name" value="BRCT_DNA_ligase_like"/>
    <property type="match status" value="1"/>
</dbReference>
<dbReference type="CDD" id="cd00114">
    <property type="entry name" value="LIGANc"/>
    <property type="match status" value="1"/>
</dbReference>
<dbReference type="FunFam" id="1.10.150.20:FF:000006">
    <property type="entry name" value="DNA ligase"/>
    <property type="match status" value="1"/>
</dbReference>
<dbReference type="FunFam" id="1.10.150.20:FF:000007">
    <property type="entry name" value="DNA ligase"/>
    <property type="match status" value="1"/>
</dbReference>
<dbReference type="FunFam" id="1.10.287.610:FF:000002">
    <property type="entry name" value="DNA ligase"/>
    <property type="match status" value="1"/>
</dbReference>
<dbReference type="FunFam" id="2.40.50.140:FF:000012">
    <property type="entry name" value="DNA ligase"/>
    <property type="match status" value="1"/>
</dbReference>
<dbReference type="FunFam" id="3.30.470.30:FF:000001">
    <property type="entry name" value="DNA ligase"/>
    <property type="match status" value="1"/>
</dbReference>
<dbReference type="Gene3D" id="6.20.10.30">
    <property type="match status" value="1"/>
</dbReference>
<dbReference type="Gene3D" id="1.10.150.20">
    <property type="entry name" value="5' to 3' exonuclease, C-terminal subdomain"/>
    <property type="match status" value="3"/>
</dbReference>
<dbReference type="Gene3D" id="3.40.50.10190">
    <property type="entry name" value="BRCT domain"/>
    <property type="match status" value="1"/>
</dbReference>
<dbReference type="Gene3D" id="3.30.470.30">
    <property type="entry name" value="DNA ligase/mRNA capping enzyme"/>
    <property type="match status" value="1"/>
</dbReference>
<dbReference type="Gene3D" id="1.10.287.610">
    <property type="entry name" value="Helix hairpin bin"/>
    <property type="match status" value="1"/>
</dbReference>
<dbReference type="Gene3D" id="2.40.50.140">
    <property type="entry name" value="Nucleic acid-binding proteins"/>
    <property type="match status" value="1"/>
</dbReference>
<dbReference type="HAMAP" id="MF_01588">
    <property type="entry name" value="DNA_ligase_A"/>
    <property type="match status" value="1"/>
</dbReference>
<dbReference type="InterPro" id="IPR001357">
    <property type="entry name" value="BRCT_dom"/>
</dbReference>
<dbReference type="InterPro" id="IPR036420">
    <property type="entry name" value="BRCT_dom_sf"/>
</dbReference>
<dbReference type="InterPro" id="IPR041663">
    <property type="entry name" value="DisA/LigA_HHH"/>
</dbReference>
<dbReference type="InterPro" id="IPR001679">
    <property type="entry name" value="DNA_ligase"/>
</dbReference>
<dbReference type="InterPro" id="IPR018239">
    <property type="entry name" value="DNA_ligase_AS"/>
</dbReference>
<dbReference type="InterPro" id="IPR033136">
    <property type="entry name" value="DNA_ligase_CS"/>
</dbReference>
<dbReference type="InterPro" id="IPR013839">
    <property type="entry name" value="DNAligase_adenylation"/>
</dbReference>
<dbReference type="InterPro" id="IPR013840">
    <property type="entry name" value="DNAligase_N"/>
</dbReference>
<dbReference type="InterPro" id="IPR003583">
    <property type="entry name" value="Hlx-hairpin-Hlx_DNA-bd_motif"/>
</dbReference>
<dbReference type="InterPro" id="IPR012340">
    <property type="entry name" value="NA-bd_OB-fold"/>
</dbReference>
<dbReference type="InterPro" id="IPR004150">
    <property type="entry name" value="NAD_DNA_ligase_OB"/>
</dbReference>
<dbReference type="InterPro" id="IPR010994">
    <property type="entry name" value="RuvA_2-like"/>
</dbReference>
<dbReference type="InterPro" id="IPR004149">
    <property type="entry name" value="Znf_DNAligase_C4"/>
</dbReference>
<dbReference type="NCBIfam" id="TIGR00575">
    <property type="entry name" value="dnlj"/>
    <property type="match status" value="1"/>
</dbReference>
<dbReference type="NCBIfam" id="NF005932">
    <property type="entry name" value="PRK07956.1"/>
    <property type="match status" value="1"/>
</dbReference>
<dbReference type="PANTHER" id="PTHR23389">
    <property type="entry name" value="CHROMOSOME TRANSMISSION FIDELITY FACTOR 18"/>
    <property type="match status" value="1"/>
</dbReference>
<dbReference type="PANTHER" id="PTHR23389:SF9">
    <property type="entry name" value="DNA LIGASE"/>
    <property type="match status" value="1"/>
</dbReference>
<dbReference type="Pfam" id="PF00533">
    <property type="entry name" value="BRCT"/>
    <property type="match status" value="1"/>
</dbReference>
<dbReference type="Pfam" id="PF01653">
    <property type="entry name" value="DNA_ligase_aden"/>
    <property type="match status" value="1"/>
</dbReference>
<dbReference type="Pfam" id="PF03120">
    <property type="entry name" value="DNA_ligase_OB"/>
    <property type="match status" value="1"/>
</dbReference>
<dbReference type="Pfam" id="PF03119">
    <property type="entry name" value="DNA_ligase_ZBD"/>
    <property type="match status" value="1"/>
</dbReference>
<dbReference type="Pfam" id="PF12826">
    <property type="entry name" value="HHH_2"/>
    <property type="match status" value="2"/>
</dbReference>
<dbReference type="Pfam" id="PF14520">
    <property type="entry name" value="HHH_5"/>
    <property type="match status" value="1"/>
</dbReference>
<dbReference type="Pfam" id="PF22745">
    <property type="entry name" value="Nlig-Ia"/>
    <property type="match status" value="1"/>
</dbReference>
<dbReference type="PIRSF" id="PIRSF001604">
    <property type="entry name" value="LigA"/>
    <property type="match status" value="1"/>
</dbReference>
<dbReference type="SMART" id="SM00292">
    <property type="entry name" value="BRCT"/>
    <property type="match status" value="1"/>
</dbReference>
<dbReference type="SMART" id="SM00278">
    <property type="entry name" value="HhH1"/>
    <property type="match status" value="3"/>
</dbReference>
<dbReference type="SMART" id="SM00532">
    <property type="entry name" value="LIGANc"/>
    <property type="match status" value="1"/>
</dbReference>
<dbReference type="SUPFAM" id="SSF52113">
    <property type="entry name" value="BRCT domain"/>
    <property type="match status" value="1"/>
</dbReference>
<dbReference type="SUPFAM" id="SSF56091">
    <property type="entry name" value="DNA ligase/mRNA capping enzyme, catalytic domain"/>
    <property type="match status" value="1"/>
</dbReference>
<dbReference type="SUPFAM" id="SSF50249">
    <property type="entry name" value="Nucleic acid-binding proteins"/>
    <property type="match status" value="1"/>
</dbReference>
<dbReference type="SUPFAM" id="SSF47781">
    <property type="entry name" value="RuvA domain 2-like"/>
    <property type="match status" value="2"/>
</dbReference>
<dbReference type="PROSITE" id="PS50172">
    <property type="entry name" value="BRCT"/>
    <property type="match status" value="1"/>
</dbReference>
<dbReference type="PROSITE" id="PS01055">
    <property type="entry name" value="DNA_LIGASE_N1"/>
    <property type="match status" value="1"/>
</dbReference>
<dbReference type="PROSITE" id="PS01056">
    <property type="entry name" value="DNA_LIGASE_N2"/>
    <property type="match status" value="1"/>
</dbReference>
<name>DNLJ_PSE14</name>
<reference key="1">
    <citation type="journal article" date="2005" name="J. Bacteriol.">
        <title>Whole-genome sequence analysis of Pseudomonas syringae pv. phaseolicola 1448A reveals divergence among pathovars in genes involved in virulence and transposition.</title>
        <authorList>
            <person name="Joardar V."/>
            <person name="Lindeberg M."/>
            <person name="Jackson R.W."/>
            <person name="Selengut J."/>
            <person name="Dodson R."/>
            <person name="Brinkac L.M."/>
            <person name="Daugherty S.C."/>
            <person name="DeBoy R.T."/>
            <person name="Durkin A.S."/>
            <person name="Gwinn Giglio M."/>
            <person name="Madupu R."/>
            <person name="Nelson W.C."/>
            <person name="Rosovitz M.J."/>
            <person name="Sullivan S.A."/>
            <person name="Crabtree J."/>
            <person name="Creasy T."/>
            <person name="Davidsen T.M."/>
            <person name="Haft D.H."/>
            <person name="Zafar N."/>
            <person name="Zhou L."/>
            <person name="Halpin R."/>
            <person name="Holley T."/>
            <person name="Khouri H.M."/>
            <person name="Feldblyum T.V."/>
            <person name="White O."/>
            <person name="Fraser C.M."/>
            <person name="Chatterjee A.K."/>
            <person name="Cartinhour S."/>
            <person name="Schneider D."/>
            <person name="Mansfield J.W."/>
            <person name="Collmer A."/>
            <person name="Buell R."/>
        </authorList>
    </citation>
    <scope>NUCLEOTIDE SEQUENCE [LARGE SCALE GENOMIC DNA]</scope>
    <source>
        <strain>1448A / Race 6</strain>
    </source>
</reference>
<comment type="function">
    <text evidence="1">DNA ligase that catalyzes the formation of phosphodiester linkages between 5'-phosphoryl and 3'-hydroxyl groups in double-stranded DNA using NAD as a coenzyme and as the energy source for the reaction. It is essential for DNA replication and repair of damaged DNA.</text>
</comment>
<comment type="catalytic activity">
    <reaction evidence="1">
        <text>NAD(+) + (deoxyribonucleotide)n-3'-hydroxyl + 5'-phospho-(deoxyribonucleotide)m = (deoxyribonucleotide)n+m + AMP + beta-nicotinamide D-nucleotide.</text>
        <dbReference type="EC" id="6.5.1.2"/>
    </reaction>
</comment>
<comment type="cofactor">
    <cofactor evidence="1">
        <name>Mg(2+)</name>
        <dbReference type="ChEBI" id="CHEBI:18420"/>
    </cofactor>
    <cofactor evidence="1">
        <name>Mn(2+)</name>
        <dbReference type="ChEBI" id="CHEBI:29035"/>
    </cofactor>
</comment>
<comment type="similarity">
    <text evidence="1">Belongs to the NAD-dependent DNA ligase family. LigA subfamily.</text>
</comment>
<keyword id="KW-0227">DNA damage</keyword>
<keyword id="KW-0234">DNA repair</keyword>
<keyword id="KW-0235">DNA replication</keyword>
<keyword id="KW-0436">Ligase</keyword>
<keyword id="KW-0460">Magnesium</keyword>
<keyword id="KW-0464">Manganese</keyword>
<keyword id="KW-0479">Metal-binding</keyword>
<keyword id="KW-0520">NAD</keyword>
<keyword id="KW-0862">Zinc</keyword>